<proteinExistence type="inferred from homology"/>
<protein>
    <recommendedName>
        <fullName evidence="1">Peptide deformylase</fullName>
        <shortName evidence="1">PDF</shortName>
        <ecNumber evidence="1">3.5.1.88</ecNumber>
    </recommendedName>
    <alternativeName>
        <fullName evidence="1">Polypeptide deformylase</fullName>
    </alternativeName>
</protein>
<sequence>MSVLQVLHIPDERLRKVAKPVEEVNAEIQRIVDDMFETMYAEEGIGLAATQVDIHQRIIVIDVSENRDERLVLINPELLEKSGETGIEEGCLSIPEQRALVPRAEKVKIRALDRDGKPFELEADGLLAICIQHEMDHLVGKLFMDYLSPLKQQRIRQKVEKLDRLKARA</sequence>
<comment type="function">
    <text evidence="1">Removes the formyl group from the N-terminal Met of newly synthesized proteins. Requires at least a dipeptide for an efficient rate of reaction. N-terminal L-methionine is a prerequisite for activity but the enzyme has broad specificity at other positions.</text>
</comment>
<comment type="catalytic activity">
    <reaction evidence="1">
        <text>N-terminal N-formyl-L-methionyl-[peptide] + H2O = N-terminal L-methionyl-[peptide] + formate</text>
        <dbReference type="Rhea" id="RHEA:24420"/>
        <dbReference type="Rhea" id="RHEA-COMP:10639"/>
        <dbReference type="Rhea" id="RHEA-COMP:10640"/>
        <dbReference type="ChEBI" id="CHEBI:15377"/>
        <dbReference type="ChEBI" id="CHEBI:15740"/>
        <dbReference type="ChEBI" id="CHEBI:49298"/>
        <dbReference type="ChEBI" id="CHEBI:64731"/>
        <dbReference type="EC" id="3.5.1.88"/>
    </reaction>
</comment>
<comment type="cofactor">
    <cofactor evidence="1">
        <name>Fe(2+)</name>
        <dbReference type="ChEBI" id="CHEBI:29033"/>
    </cofactor>
    <text evidence="1">Binds 1 Fe(2+) ion.</text>
</comment>
<comment type="similarity">
    <text evidence="1">Belongs to the polypeptide deformylase family.</text>
</comment>
<evidence type="ECO:0000255" key="1">
    <source>
        <dbReference type="HAMAP-Rule" id="MF_00163"/>
    </source>
</evidence>
<keyword id="KW-0378">Hydrolase</keyword>
<keyword id="KW-0408">Iron</keyword>
<keyword id="KW-0479">Metal-binding</keyword>
<keyword id="KW-0648">Protein biosynthesis</keyword>
<keyword id="KW-1185">Reference proteome</keyword>
<organism>
    <name type="scientific">Escherichia coli O1:K1 / APEC</name>
    <dbReference type="NCBI Taxonomy" id="405955"/>
    <lineage>
        <taxon>Bacteria</taxon>
        <taxon>Pseudomonadati</taxon>
        <taxon>Pseudomonadota</taxon>
        <taxon>Gammaproteobacteria</taxon>
        <taxon>Enterobacterales</taxon>
        <taxon>Enterobacteriaceae</taxon>
        <taxon>Escherichia</taxon>
    </lineage>
</organism>
<dbReference type="EC" id="3.5.1.88" evidence="1"/>
<dbReference type="EMBL" id="CP000468">
    <property type="protein sequence ID" value="ABJ02768.1"/>
    <property type="molecule type" value="Genomic_DNA"/>
</dbReference>
<dbReference type="RefSeq" id="WP_000114984.1">
    <property type="nucleotide sequence ID" value="NZ_CADILS010000044.1"/>
</dbReference>
<dbReference type="BMRB" id="A1AGH8"/>
<dbReference type="SMR" id="A1AGH8"/>
<dbReference type="GeneID" id="89518132"/>
<dbReference type="KEGG" id="ecv:APECO1_3160"/>
<dbReference type="HOGENOM" id="CLU_061901_2_1_6"/>
<dbReference type="Proteomes" id="UP000008216">
    <property type="component" value="Chromosome"/>
</dbReference>
<dbReference type="GO" id="GO:0046872">
    <property type="term" value="F:metal ion binding"/>
    <property type="evidence" value="ECO:0007669"/>
    <property type="project" value="UniProtKB-KW"/>
</dbReference>
<dbReference type="GO" id="GO:0042586">
    <property type="term" value="F:peptide deformylase activity"/>
    <property type="evidence" value="ECO:0007669"/>
    <property type="project" value="UniProtKB-UniRule"/>
</dbReference>
<dbReference type="GO" id="GO:0043686">
    <property type="term" value="P:co-translational protein modification"/>
    <property type="evidence" value="ECO:0007669"/>
    <property type="project" value="TreeGrafter"/>
</dbReference>
<dbReference type="GO" id="GO:0006412">
    <property type="term" value="P:translation"/>
    <property type="evidence" value="ECO:0007669"/>
    <property type="project" value="UniProtKB-UniRule"/>
</dbReference>
<dbReference type="CDD" id="cd00487">
    <property type="entry name" value="Pep_deformylase"/>
    <property type="match status" value="1"/>
</dbReference>
<dbReference type="FunFam" id="3.90.45.10:FF:000001">
    <property type="entry name" value="Peptide deformylase"/>
    <property type="match status" value="1"/>
</dbReference>
<dbReference type="Gene3D" id="3.90.45.10">
    <property type="entry name" value="Peptide deformylase"/>
    <property type="match status" value="1"/>
</dbReference>
<dbReference type="HAMAP" id="MF_00163">
    <property type="entry name" value="Pep_deformylase"/>
    <property type="match status" value="1"/>
</dbReference>
<dbReference type="InterPro" id="IPR023635">
    <property type="entry name" value="Peptide_deformylase"/>
</dbReference>
<dbReference type="InterPro" id="IPR036821">
    <property type="entry name" value="Peptide_deformylase_sf"/>
</dbReference>
<dbReference type="NCBIfam" id="TIGR00079">
    <property type="entry name" value="pept_deformyl"/>
    <property type="match status" value="1"/>
</dbReference>
<dbReference type="NCBIfam" id="NF001159">
    <property type="entry name" value="PRK00150.1-3"/>
    <property type="match status" value="1"/>
</dbReference>
<dbReference type="PANTHER" id="PTHR10458">
    <property type="entry name" value="PEPTIDE DEFORMYLASE"/>
    <property type="match status" value="1"/>
</dbReference>
<dbReference type="PANTHER" id="PTHR10458:SF21">
    <property type="entry name" value="PEPTIDE DEFORMYLASE"/>
    <property type="match status" value="1"/>
</dbReference>
<dbReference type="Pfam" id="PF01327">
    <property type="entry name" value="Pep_deformylase"/>
    <property type="match status" value="1"/>
</dbReference>
<dbReference type="PIRSF" id="PIRSF004749">
    <property type="entry name" value="Pep_def"/>
    <property type="match status" value="1"/>
</dbReference>
<dbReference type="PRINTS" id="PR01576">
    <property type="entry name" value="PDEFORMYLASE"/>
</dbReference>
<dbReference type="SUPFAM" id="SSF56420">
    <property type="entry name" value="Peptide deformylase"/>
    <property type="match status" value="1"/>
</dbReference>
<gene>
    <name evidence="1" type="primary">def</name>
    <name type="ordered locus">Ecok1_32740</name>
    <name type="ORF">APECO1_3160</name>
</gene>
<name>DEF_ECOK1</name>
<accession>A1AGH8</accession>
<feature type="chain" id="PRO_0000301031" description="Peptide deformylase">
    <location>
        <begin position="1"/>
        <end position="169"/>
    </location>
</feature>
<feature type="active site" evidence="1">
    <location>
        <position position="134"/>
    </location>
</feature>
<feature type="binding site" evidence="1">
    <location>
        <position position="91"/>
    </location>
    <ligand>
        <name>Fe cation</name>
        <dbReference type="ChEBI" id="CHEBI:24875"/>
    </ligand>
</feature>
<feature type="binding site" evidence="1">
    <location>
        <position position="133"/>
    </location>
    <ligand>
        <name>Fe cation</name>
        <dbReference type="ChEBI" id="CHEBI:24875"/>
    </ligand>
</feature>
<feature type="binding site" evidence="1">
    <location>
        <position position="137"/>
    </location>
    <ligand>
        <name>Fe cation</name>
        <dbReference type="ChEBI" id="CHEBI:24875"/>
    </ligand>
</feature>
<reference key="1">
    <citation type="journal article" date="2007" name="J. Bacteriol.">
        <title>The genome sequence of avian pathogenic Escherichia coli strain O1:K1:H7 shares strong similarities with human extraintestinal pathogenic E. coli genomes.</title>
        <authorList>
            <person name="Johnson T.J."/>
            <person name="Kariyawasam S."/>
            <person name="Wannemuehler Y."/>
            <person name="Mangiamele P."/>
            <person name="Johnson S.J."/>
            <person name="Doetkott C."/>
            <person name="Skyberg J.A."/>
            <person name="Lynne A.M."/>
            <person name="Johnson J.R."/>
            <person name="Nolan L.K."/>
        </authorList>
    </citation>
    <scope>NUCLEOTIDE SEQUENCE [LARGE SCALE GENOMIC DNA]</scope>
</reference>